<gene>
    <name type="primary">OR10G9</name>
    <name type="synonym">OR10G10P</name>
</gene>
<organism>
    <name type="scientific">Homo sapiens</name>
    <name type="common">Human</name>
    <dbReference type="NCBI Taxonomy" id="9606"/>
    <lineage>
        <taxon>Eukaryota</taxon>
        <taxon>Metazoa</taxon>
        <taxon>Chordata</taxon>
        <taxon>Craniata</taxon>
        <taxon>Vertebrata</taxon>
        <taxon>Euteleostomi</taxon>
        <taxon>Mammalia</taxon>
        <taxon>Eutheria</taxon>
        <taxon>Euarchontoglires</taxon>
        <taxon>Primates</taxon>
        <taxon>Haplorrhini</taxon>
        <taxon>Catarrhini</taxon>
        <taxon>Hominidae</taxon>
        <taxon>Homo</taxon>
    </lineage>
</organism>
<sequence>MSKTSLVTAFILTGLPHAPGLDAPLFGIFLVVYVLTVLGNLLILLVIRVDSHLHTPMYYFLTNLSFIDMWFSTVTVPKMLMTLVSPSGRAISFHSCVAQLYFFHFLGSTECFLYTVMSYDRYLAISYPLRYTSMMSGSRCALLATSTWLSGSLHSAVQTILTFHLPYCGPNQIQHYLCDAPPILKLACADTSANEMVIFVDIGLVASGCFLLIVLSYVSIVCSILRIHTSEGRHRAFQTCASHCIVVLCFFVPCVFIYLRPGSRDVVDGVVAIFYTVLTPLLNPVVYTLRNKEVKKAVLKLRDKVAHSQGE</sequence>
<accession>Q8NGN4</accession>
<feature type="chain" id="PRO_0000150701" description="Olfactory receptor 10G9">
    <location>
        <begin position="1"/>
        <end position="311"/>
    </location>
</feature>
<feature type="topological domain" description="Extracellular" evidence="1">
    <location>
        <begin position="1"/>
        <end position="23"/>
    </location>
</feature>
<feature type="transmembrane region" description="Helical; Name=1" evidence="1">
    <location>
        <begin position="24"/>
        <end position="44"/>
    </location>
</feature>
<feature type="topological domain" description="Cytoplasmic" evidence="1">
    <location>
        <begin position="45"/>
        <end position="52"/>
    </location>
</feature>
<feature type="transmembrane region" description="Helical; Name=2" evidence="1">
    <location>
        <begin position="53"/>
        <end position="73"/>
    </location>
</feature>
<feature type="topological domain" description="Extracellular" evidence="1">
    <location>
        <begin position="74"/>
        <end position="98"/>
    </location>
</feature>
<feature type="transmembrane region" description="Helical; Name=3" evidence="1">
    <location>
        <begin position="99"/>
        <end position="119"/>
    </location>
</feature>
<feature type="topological domain" description="Cytoplasmic" evidence="1">
    <location>
        <begin position="120"/>
        <end position="138"/>
    </location>
</feature>
<feature type="transmembrane region" description="Helical; Name=4" evidence="1">
    <location>
        <begin position="139"/>
        <end position="159"/>
    </location>
</feature>
<feature type="topological domain" description="Extracellular" evidence="1">
    <location>
        <begin position="160"/>
        <end position="196"/>
    </location>
</feature>
<feature type="transmembrane region" description="Helical; Name=5" evidence="1">
    <location>
        <begin position="197"/>
        <end position="216"/>
    </location>
</feature>
<feature type="topological domain" description="Cytoplasmic" evidence="1">
    <location>
        <begin position="217"/>
        <end position="236"/>
    </location>
</feature>
<feature type="transmembrane region" description="Helical; Name=6" evidence="1">
    <location>
        <begin position="237"/>
        <end position="257"/>
    </location>
</feature>
<feature type="topological domain" description="Extracellular" evidence="1">
    <location>
        <begin position="258"/>
        <end position="268"/>
    </location>
</feature>
<feature type="transmembrane region" description="Helical; Name=7" evidence="1">
    <location>
        <begin position="269"/>
        <end position="289"/>
    </location>
</feature>
<feature type="topological domain" description="Cytoplasmic" evidence="1">
    <location>
        <begin position="290"/>
        <end position="311"/>
    </location>
</feature>
<feature type="disulfide bond" evidence="2">
    <location>
        <begin position="96"/>
        <end position="188"/>
    </location>
</feature>
<feature type="sequence variant" id="VAR_053280" description="In dbSNP:rs12366219.">
    <original>M</original>
    <variation>V</variation>
    <location>
        <position position="134"/>
    </location>
</feature>
<feature type="sequence variant" id="VAR_034286" description="In dbSNP:rs17128190.">
    <original>S</original>
    <variation>T</variation>
    <location>
        <position position="136"/>
    </location>
</feature>
<feature type="sequence variant" id="VAR_034287" description="In dbSNP:rs11219413.">
    <original>Q</original>
    <variation>R</variation>
    <location>
        <position position="172"/>
    </location>
</feature>
<feature type="sequence variant" id="VAR_060029" description="In dbSNP:rs12221656.">
    <original>H</original>
    <variation>R</variation>
    <location>
        <position position="228"/>
    </location>
</feature>
<reference key="1">
    <citation type="submission" date="2001-07" db="EMBL/GenBank/DDBJ databases">
        <title>Genome-wide discovery and analysis of human seven transmembrane helix receptor genes.</title>
        <authorList>
            <person name="Suwa M."/>
            <person name="Sato T."/>
            <person name="Okouchi I."/>
            <person name="Arita M."/>
            <person name="Futami K."/>
            <person name="Matsumoto S."/>
            <person name="Tsutsumi S."/>
            <person name="Aburatani H."/>
            <person name="Asai K."/>
            <person name="Akiyama Y."/>
        </authorList>
    </citation>
    <scope>NUCLEOTIDE SEQUENCE [GENOMIC DNA]</scope>
</reference>
<proteinExistence type="inferred from homology"/>
<keyword id="KW-1003">Cell membrane</keyword>
<keyword id="KW-1015">Disulfide bond</keyword>
<keyword id="KW-0297">G-protein coupled receptor</keyword>
<keyword id="KW-0472">Membrane</keyword>
<keyword id="KW-0552">Olfaction</keyword>
<keyword id="KW-0675">Receptor</keyword>
<keyword id="KW-1185">Reference proteome</keyword>
<keyword id="KW-0716">Sensory transduction</keyword>
<keyword id="KW-0807">Transducer</keyword>
<keyword id="KW-0812">Transmembrane</keyword>
<keyword id="KW-1133">Transmembrane helix</keyword>
<evidence type="ECO:0000255" key="1"/>
<evidence type="ECO:0000255" key="2">
    <source>
        <dbReference type="PROSITE-ProRule" id="PRU00521"/>
    </source>
</evidence>
<evidence type="ECO:0000305" key="3"/>
<comment type="function">
    <text evidence="3">Odorant receptor.</text>
</comment>
<comment type="subcellular location">
    <subcellularLocation>
        <location>Cell membrane</location>
        <topology>Multi-pass membrane protein</topology>
    </subcellularLocation>
</comment>
<comment type="similarity">
    <text evidence="2">Belongs to the G-protein coupled receptor 1 family.</text>
</comment>
<comment type="online information" name="Human Olfactory Receptor Data Exploratorium (HORDE)">
    <link uri="http://genome.weizmann.ac.il/horde/card/index/symbol:OR10G9"/>
</comment>
<dbReference type="EMBL" id="AB065756">
    <property type="protein sequence ID" value="BAC05976.1"/>
    <property type="molecule type" value="Genomic_DNA"/>
</dbReference>
<dbReference type="CCDS" id="CCDS31703.1"/>
<dbReference type="RefSeq" id="NP_001001953.1">
    <property type="nucleotide sequence ID" value="NM_001001953.1"/>
</dbReference>
<dbReference type="SMR" id="Q8NGN4"/>
<dbReference type="BioGRID" id="128588">
    <property type="interactions" value="5"/>
</dbReference>
<dbReference type="FunCoup" id="Q8NGN4">
    <property type="interactions" value="459"/>
</dbReference>
<dbReference type="STRING" id="9606.ENSP00000364164"/>
<dbReference type="iPTMnet" id="Q8NGN4"/>
<dbReference type="PhosphoSitePlus" id="Q8NGN4"/>
<dbReference type="BioMuta" id="OR10G9"/>
<dbReference type="DMDM" id="38372734"/>
<dbReference type="PaxDb" id="9606-ENSP00000364164"/>
<dbReference type="PeptideAtlas" id="Q8NGN4"/>
<dbReference type="Antibodypedia" id="56782">
    <property type="antibodies" value="107 antibodies from 21 providers"/>
</dbReference>
<dbReference type="DNASU" id="219870"/>
<dbReference type="Ensembl" id="ENST00000375024.1">
    <property type="protein sequence ID" value="ENSP00000364164.1"/>
    <property type="gene ID" value="ENSG00000236981.1"/>
</dbReference>
<dbReference type="GeneID" id="219870"/>
<dbReference type="KEGG" id="hsa:219870"/>
<dbReference type="MANE-Select" id="ENST00000375024.1">
    <property type="protein sequence ID" value="ENSP00000364164.1"/>
    <property type="RefSeq nucleotide sequence ID" value="NM_001001953.1"/>
    <property type="RefSeq protein sequence ID" value="NP_001001953.1"/>
</dbReference>
<dbReference type="UCSC" id="uc010sad.2">
    <property type="organism name" value="human"/>
</dbReference>
<dbReference type="AGR" id="HGNC:15129"/>
<dbReference type="CTD" id="219870"/>
<dbReference type="GeneCards" id="OR10G9"/>
<dbReference type="HGNC" id="HGNC:15129">
    <property type="gene designation" value="OR10G9"/>
</dbReference>
<dbReference type="HPA" id="ENSG00000236981">
    <property type="expression patterns" value="Not detected"/>
</dbReference>
<dbReference type="neXtProt" id="NX_Q8NGN4"/>
<dbReference type="PharmGKB" id="PA31976"/>
<dbReference type="VEuPathDB" id="HostDB:ENSG00000236981"/>
<dbReference type="eggNOG" id="ENOG502SI4A">
    <property type="taxonomic scope" value="Eukaryota"/>
</dbReference>
<dbReference type="GeneTree" id="ENSGT01050000244869"/>
<dbReference type="HOGENOM" id="CLU_012526_8_1_1"/>
<dbReference type="InParanoid" id="Q8NGN4"/>
<dbReference type="OMA" id="CGPQQIQ"/>
<dbReference type="OrthoDB" id="9045771at2759"/>
<dbReference type="PAN-GO" id="Q8NGN4">
    <property type="GO annotations" value="1 GO annotation based on evolutionary models"/>
</dbReference>
<dbReference type="PhylomeDB" id="Q8NGN4"/>
<dbReference type="TreeFam" id="TF337251"/>
<dbReference type="PathwayCommons" id="Q8NGN4"/>
<dbReference type="Reactome" id="R-HSA-9752946">
    <property type="pathway name" value="Expression and translocation of olfactory receptors"/>
</dbReference>
<dbReference type="BioGRID-ORCS" id="219870">
    <property type="hits" value="6 hits in 650 CRISPR screens"/>
</dbReference>
<dbReference type="GeneWiki" id="OR10G9"/>
<dbReference type="GenomeRNAi" id="219870"/>
<dbReference type="Pharos" id="Q8NGN4">
    <property type="development level" value="Tdark"/>
</dbReference>
<dbReference type="PRO" id="PR:Q8NGN4"/>
<dbReference type="Proteomes" id="UP000005640">
    <property type="component" value="Chromosome 11"/>
</dbReference>
<dbReference type="RNAct" id="Q8NGN4">
    <property type="molecule type" value="protein"/>
</dbReference>
<dbReference type="Bgee" id="ENSG00000236981">
    <property type="expression patterns" value="Expressed in primordial germ cell in gonad"/>
</dbReference>
<dbReference type="GO" id="GO:0005886">
    <property type="term" value="C:plasma membrane"/>
    <property type="evidence" value="ECO:0000318"/>
    <property type="project" value="GO_Central"/>
</dbReference>
<dbReference type="GO" id="GO:0004930">
    <property type="term" value="F:G protein-coupled receptor activity"/>
    <property type="evidence" value="ECO:0007669"/>
    <property type="project" value="UniProtKB-KW"/>
</dbReference>
<dbReference type="GO" id="GO:0004984">
    <property type="term" value="F:olfactory receptor activity"/>
    <property type="evidence" value="ECO:0000318"/>
    <property type="project" value="GO_Central"/>
</dbReference>
<dbReference type="GO" id="GO:0050911">
    <property type="term" value="P:detection of chemical stimulus involved in sensory perception of smell"/>
    <property type="evidence" value="ECO:0000318"/>
    <property type="project" value="GO_Central"/>
</dbReference>
<dbReference type="CDD" id="cd15916">
    <property type="entry name" value="7tmA_OR10G-like"/>
    <property type="match status" value="1"/>
</dbReference>
<dbReference type="FunFam" id="1.20.1070.10:FF:000001">
    <property type="entry name" value="Olfactory receptor"/>
    <property type="match status" value="1"/>
</dbReference>
<dbReference type="Gene3D" id="1.20.1070.10">
    <property type="entry name" value="Rhodopsin 7-helix transmembrane proteins"/>
    <property type="match status" value="1"/>
</dbReference>
<dbReference type="InterPro" id="IPR000276">
    <property type="entry name" value="GPCR_Rhodpsn"/>
</dbReference>
<dbReference type="InterPro" id="IPR017452">
    <property type="entry name" value="GPCR_Rhodpsn_7TM"/>
</dbReference>
<dbReference type="InterPro" id="IPR000725">
    <property type="entry name" value="Olfact_rcpt"/>
</dbReference>
<dbReference type="PANTHER" id="PTHR26453">
    <property type="entry name" value="OLFACTORY RECEPTOR"/>
    <property type="match status" value="1"/>
</dbReference>
<dbReference type="Pfam" id="PF13853">
    <property type="entry name" value="7tm_4"/>
    <property type="match status" value="1"/>
</dbReference>
<dbReference type="PRINTS" id="PR00237">
    <property type="entry name" value="GPCRRHODOPSN"/>
</dbReference>
<dbReference type="PRINTS" id="PR00245">
    <property type="entry name" value="OLFACTORYR"/>
</dbReference>
<dbReference type="SUPFAM" id="SSF81321">
    <property type="entry name" value="Family A G protein-coupled receptor-like"/>
    <property type="match status" value="1"/>
</dbReference>
<dbReference type="PROSITE" id="PS50262">
    <property type="entry name" value="G_PROTEIN_RECEP_F1_2"/>
    <property type="match status" value="1"/>
</dbReference>
<protein>
    <recommendedName>
        <fullName>Olfactory receptor 10G9</fullName>
    </recommendedName>
    <alternativeName>
        <fullName>Olfactory receptor 10G10</fullName>
    </alternativeName>
</protein>
<name>O10G9_HUMAN</name>